<evidence type="ECO:0000255" key="1">
    <source>
        <dbReference type="HAMAP-Rule" id="MF_01723"/>
    </source>
</evidence>
<name>THIQ_JANSC</name>
<protein>
    <recommendedName>
        <fullName evidence="1">Thiamine import ATP-binding protein ThiQ</fullName>
        <ecNumber evidence="1">7.6.2.15</ecNumber>
    </recommendedName>
</protein>
<gene>
    <name evidence="1" type="primary">thiQ</name>
    <name type="ordered locus">Jann_0328</name>
</gene>
<dbReference type="EC" id="7.6.2.15" evidence="1"/>
<dbReference type="EMBL" id="CP000264">
    <property type="protein sequence ID" value="ABD53245.1"/>
    <property type="molecule type" value="Genomic_DNA"/>
</dbReference>
<dbReference type="RefSeq" id="WP_011453454.1">
    <property type="nucleotide sequence ID" value="NC_007802.1"/>
</dbReference>
<dbReference type="SMR" id="Q28VL7"/>
<dbReference type="STRING" id="290400.Jann_0328"/>
<dbReference type="KEGG" id="jan:Jann_0328"/>
<dbReference type="eggNOG" id="COG3840">
    <property type="taxonomic scope" value="Bacteria"/>
</dbReference>
<dbReference type="HOGENOM" id="CLU_000604_1_22_5"/>
<dbReference type="OrthoDB" id="9802264at2"/>
<dbReference type="Proteomes" id="UP000008326">
    <property type="component" value="Chromosome"/>
</dbReference>
<dbReference type="GO" id="GO:0005886">
    <property type="term" value="C:plasma membrane"/>
    <property type="evidence" value="ECO:0007669"/>
    <property type="project" value="UniProtKB-SubCell"/>
</dbReference>
<dbReference type="GO" id="GO:0048502">
    <property type="term" value="F:ABC-type thiamine transporter activity"/>
    <property type="evidence" value="ECO:0007669"/>
    <property type="project" value="UniProtKB-EC"/>
</dbReference>
<dbReference type="GO" id="GO:0005524">
    <property type="term" value="F:ATP binding"/>
    <property type="evidence" value="ECO:0007669"/>
    <property type="project" value="UniProtKB-KW"/>
</dbReference>
<dbReference type="GO" id="GO:0016887">
    <property type="term" value="F:ATP hydrolysis activity"/>
    <property type="evidence" value="ECO:0007669"/>
    <property type="project" value="InterPro"/>
</dbReference>
<dbReference type="Gene3D" id="3.40.50.300">
    <property type="entry name" value="P-loop containing nucleotide triphosphate hydrolases"/>
    <property type="match status" value="1"/>
</dbReference>
<dbReference type="InterPro" id="IPR003593">
    <property type="entry name" value="AAA+_ATPase"/>
</dbReference>
<dbReference type="InterPro" id="IPR050093">
    <property type="entry name" value="ABC_SmlMolc_Importer"/>
</dbReference>
<dbReference type="InterPro" id="IPR003439">
    <property type="entry name" value="ABC_transporter-like_ATP-bd"/>
</dbReference>
<dbReference type="InterPro" id="IPR017871">
    <property type="entry name" value="ABC_transporter-like_CS"/>
</dbReference>
<dbReference type="InterPro" id="IPR027417">
    <property type="entry name" value="P-loop_NTPase"/>
</dbReference>
<dbReference type="PANTHER" id="PTHR42781">
    <property type="entry name" value="SPERMIDINE/PUTRESCINE IMPORT ATP-BINDING PROTEIN POTA"/>
    <property type="match status" value="1"/>
</dbReference>
<dbReference type="PANTHER" id="PTHR42781:SF1">
    <property type="entry name" value="THIAMINE IMPORT ATP-BINDING PROTEIN THIQ"/>
    <property type="match status" value="1"/>
</dbReference>
<dbReference type="Pfam" id="PF00005">
    <property type="entry name" value="ABC_tran"/>
    <property type="match status" value="1"/>
</dbReference>
<dbReference type="SMART" id="SM00382">
    <property type="entry name" value="AAA"/>
    <property type="match status" value="1"/>
</dbReference>
<dbReference type="SUPFAM" id="SSF52540">
    <property type="entry name" value="P-loop containing nucleoside triphosphate hydrolases"/>
    <property type="match status" value="1"/>
</dbReference>
<dbReference type="PROSITE" id="PS00211">
    <property type="entry name" value="ABC_TRANSPORTER_1"/>
    <property type="match status" value="1"/>
</dbReference>
<dbReference type="PROSITE" id="PS50893">
    <property type="entry name" value="ABC_TRANSPORTER_2"/>
    <property type="match status" value="1"/>
</dbReference>
<dbReference type="PROSITE" id="PS51288">
    <property type="entry name" value="THIQ"/>
    <property type="match status" value="1"/>
</dbReference>
<organism>
    <name type="scientific">Jannaschia sp. (strain CCS1)</name>
    <dbReference type="NCBI Taxonomy" id="290400"/>
    <lineage>
        <taxon>Bacteria</taxon>
        <taxon>Pseudomonadati</taxon>
        <taxon>Pseudomonadota</taxon>
        <taxon>Alphaproteobacteria</taxon>
        <taxon>Rhodobacterales</taxon>
        <taxon>Roseobacteraceae</taxon>
        <taxon>Jannaschia</taxon>
    </lineage>
</organism>
<proteinExistence type="inferred from homology"/>
<feature type="chain" id="PRO_0000274445" description="Thiamine import ATP-binding protein ThiQ">
    <location>
        <begin position="1"/>
        <end position="229"/>
    </location>
</feature>
<feature type="domain" description="ABC transporter" evidence="1">
    <location>
        <begin position="2"/>
        <end position="229"/>
    </location>
</feature>
<feature type="binding site" evidence="1">
    <location>
        <begin position="32"/>
        <end position="39"/>
    </location>
    <ligand>
        <name>ATP</name>
        <dbReference type="ChEBI" id="CHEBI:30616"/>
    </ligand>
</feature>
<keyword id="KW-0067">ATP-binding</keyword>
<keyword id="KW-0997">Cell inner membrane</keyword>
<keyword id="KW-1003">Cell membrane</keyword>
<keyword id="KW-0472">Membrane</keyword>
<keyword id="KW-0547">Nucleotide-binding</keyword>
<keyword id="KW-1185">Reference proteome</keyword>
<keyword id="KW-1278">Translocase</keyword>
<keyword id="KW-0813">Transport</keyword>
<sequence>MLHLENIRVRQGSFTLSAHLTIAKGARVALMGASGSGKSTLLSTLSGFLWPDAGRITMAGADVAKTPVADRPISILFQDGNLFPHLSVFDNVALGIRPNLKLGSEDERRVTRALTQVGLEGMEQRKPSALSGGQQSRVALARMLLRDKPVALLDEPFSALDPGLRREMLSLVRKLCDETGQTLIMATHDLRDAERLCDRVLLLDDGKVVLDAPLAEAVANNAEPLRPWM</sequence>
<reference key="1">
    <citation type="submission" date="2006-02" db="EMBL/GenBank/DDBJ databases">
        <title>Complete sequence of chromosome of Jannaschia sp. CCS1.</title>
        <authorList>
            <consortium name="US DOE Joint Genome Institute"/>
            <person name="Copeland A."/>
            <person name="Lucas S."/>
            <person name="Lapidus A."/>
            <person name="Barry K."/>
            <person name="Detter J.C."/>
            <person name="Glavina del Rio T."/>
            <person name="Hammon N."/>
            <person name="Israni S."/>
            <person name="Pitluck S."/>
            <person name="Brettin T."/>
            <person name="Bruce D."/>
            <person name="Han C."/>
            <person name="Tapia R."/>
            <person name="Gilna P."/>
            <person name="Chertkov O."/>
            <person name="Saunders E."/>
            <person name="Schmutz J."/>
            <person name="Larimer F."/>
            <person name="Land M."/>
            <person name="Kyrpides N."/>
            <person name="Lykidis A."/>
            <person name="Moran M.A."/>
            <person name="Belas R."/>
            <person name="Ye W."/>
            <person name="Buchan A."/>
            <person name="Gonzalez J.M."/>
            <person name="Schell M.A."/>
            <person name="Richardson P."/>
        </authorList>
    </citation>
    <scope>NUCLEOTIDE SEQUENCE [LARGE SCALE GENOMIC DNA]</scope>
    <source>
        <strain>CCS1</strain>
    </source>
</reference>
<accession>Q28VL7</accession>
<comment type="function">
    <text evidence="1">Part of the ABC transporter complex ThiBPQ involved in thiamine import. Responsible for energy coupling to the transport system.</text>
</comment>
<comment type="catalytic activity">
    <reaction evidence="1">
        <text>thiamine(out) + ATP + H2O = thiamine(in) + ADP + phosphate + H(+)</text>
        <dbReference type="Rhea" id="RHEA:29811"/>
        <dbReference type="ChEBI" id="CHEBI:15377"/>
        <dbReference type="ChEBI" id="CHEBI:15378"/>
        <dbReference type="ChEBI" id="CHEBI:18385"/>
        <dbReference type="ChEBI" id="CHEBI:30616"/>
        <dbReference type="ChEBI" id="CHEBI:43474"/>
        <dbReference type="ChEBI" id="CHEBI:456216"/>
        <dbReference type="EC" id="7.6.2.15"/>
    </reaction>
</comment>
<comment type="subunit">
    <text evidence="1">The complex is composed of two ATP-binding proteins (ThiQ), two transmembrane proteins (ThiP) and a solute-binding protein (ThiB).</text>
</comment>
<comment type="subcellular location">
    <subcellularLocation>
        <location evidence="1">Cell inner membrane</location>
        <topology evidence="1">Peripheral membrane protein</topology>
    </subcellularLocation>
</comment>
<comment type="similarity">
    <text evidence="1">Belongs to the ABC transporter superfamily. Thiamine importer (TC 3.A.1.19.1) family.</text>
</comment>